<protein>
    <recommendedName>
        <fullName>Interleukin-2</fullName>
        <shortName>IL-2</shortName>
    </recommendedName>
    <alternativeName>
        <fullName>T-cell growth factor</fullName>
        <shortName>TCGF</shortName>
    </alternativeName>
</protein>
<reference key="1">
    <citation type="journal article" date="1984" name="Nucleic Acids Res.">
        <title>Organization and structure of the mouse interleukin-2 gene.</title>
        <authorList>
            <person name="Fuse A."/>
            <person name="Fujita T."/>
            <person name="Yasumitsu H."/>
            <person name="Kashima N."/>
            <person name="Hasegawa K."/>
            <person name="Taniguchi T."/>
        </authorList>
    </citation>
    <scope>NUCLEOTIDE SEQUENCE [GENOMIC DNA]</scope>
    <source>
        <strain>BALB/cJ</strain>
    </source>
</reference>
<reference key="2">
    <citation type="journal article" date="1985" name="Nature">
        <title>Unique structure of murine interleukin-2 as deduced from cloned cDNAs.</title>
        <authorList>
            <person name="Kashima N."/>
            <person name="Nishi-Takaoka C."/>
            <person name="Fujita T."/>
            <person name="Taki S."/>
            <person name="Yamada G."/>
            <person name="Hamuro J."/>
            <person name="Taniguchi T."/>
        </authorList>
    </citation>
    <scope>NUCLEOTIDE SEQUENCE [MRNA]</scope>
    <source>
        <strain>B10BR</strain>
    </source>
</reference>
<reference key="3">
    <citation type="journal article" date="1985" name="Proc. Natl. Acad. Sci. U.S.A.">
        <title>Use of a cDNA expression vector for isolation of mouse interleukin 2 cDNA clones: expression of T-cell growth-factor activity after transfection of monkey cells.</title>
        <authorList>
            <person name="Yokota T."/>
            <person name="Arai N."/>
            <person name="Lee F."/>
            <person name="Rennick D."/>
            <person name="Mosmann T."/>
            <person name="Arai K."/>
        </authorList>
    </citation>
    <scope>NUCLEOTIDE SEQUENCE [MRNA]</scope>
    <source>
        <strain>C57BL/6J</strain>
    </source>
</reference>
<reference key="4">
    <citation type="journal article" date="1986" name="Mol. Biol. Rep.">
        <title>Cloning and structure of a mouse interleukin-2 chromosomal gene.</title>
        <authorList>
            <person name="Degrave W."/>
            <person name="Simons G."/>
            <person name="Devos R."/>
            <person name="Plaetinck G."/>
            <person name="Remaut E."/>
            <person name="Tavernier J."/>
            <person name="Fiers W."/>
        </authorList>
    </citation>
    <scope>NUCLEOTIDE SEQUENCE [GENOMIC DNA]</scope>
</reference>
<reference key="5">
    <citation type="journal article" date="2000" name="Genome Res.">
        <title>Congenic mapping of the type 1 diabetes locus, Idd3, to a 780-kb region of mouse chromosome 3: identification of a candidate segment of ancestral DNA by haplotype mapping.</title>
        <authorList>
            <person name="Lyons P.A."/>
            <person name="Armitage N."/>
            <person name="Argentina F."/>
            <person name="Denny P."/>
            <person name="Hill N.J."/>
            <person name="Lord C.J."/>
            <person name="Wilusz M.B."/>
            <person name="Peterson L.B."/>
            <person name="Wicker L.S."/>
            <person name="Todd J.A."/>
        </authorList>
    </citation>
    <scope>NUCLEOTIDE SEQUENCE [GENOMIC DNA]</scope>
    <source>
        <strain>C57BL/6J</strain>
    </source>
</reference>
<reference key="6">
    <citation type="submission" date="1998-05" db="EMBL/GenBank/DDBJ databases">
        <authorList>
            <person name="Ma R.Z."/>
            <person name="Teuscher C."/>
        </authorList>
    </citation>
    <scope>NUCLEOTIDE SEQUENCE [MRNA]</scope>
    <source>
        <strain>C57BL/6J</strain>
        <tissue>Spleen</tissue>
    </source>
</reference>
<reference key="7">
    <citation type="journal article" date="2009" name="PLoS Biol.">
        <title>Lineage-specific biology revealed by a finished genome assembly of the mouse.</title>
        <authorList>
            <person name="Church D.M."/>
            <person name="Goodstadt L."/>
            <person name="Hillier L.W."/>
            <person name="Zody M.C."/>
            <person name="Goldstein S."/>
            <person name="She X."/>
            <person name="Bult C.J."/>
            <person name="Agarwala R."/>
            <person name="Cherry J.L."/>
            <person name="DiCuccio M."/>
            <person name="Hlavina W."/>
            <person name="Kapustin Y."/>
            <person name="Meric P."/>
            <person name="Maglott D."/>
            <person name="Birtle Z."/>
            <person name="Marques A.C."/>
            <person name="Graves T."/>
            <person name="Zhou S."/>
            <person name="Teague B."/>
            <person name="Potamousis K."/>
            <person name="Churas C."/>
            <person name="Place M."/>
            <person name="Herschleb J."/>
            <person name="Runnheim R."/>
            <person name="Forrest D."/>
            <person name="Amos-Landgraf J."/>
            <person name="Schwartz D.C."/>
            <person name="Cheng Z."/>
            <person name="Lindblad-Toh K."/>
            <person name="Eichler E.E."/>
            <person name="Ponting C.P."/>
        </authorList>
    </citation>
    <scope>NUCLEOTIDE SEQUENCE [LARGE SCALE GENOMIC DNA]</scope>
    <source>
        <strain>C57BL/6J</strain>
    </source>
</reference>
<reference key="8">
    <citation type="journal article" date="1992" name="Biochim. Biophys. Acta">
        <title>A new cDNA sequence for the murine interleukin-2 gene.</title>
        <authorList>
            <person name="Matesanz F."/>
            <person name="Alcina A."/>
            <person name="Pellicer A."/>
        </authorList>
    </citation>
    <scope>NUCLEOTIDE SEQUENCE [MRNA] OF 1-63</scope>
    <source>
        <strain>RF</strain>
        <tissue>Spleen</tissue>
    </source>
</reference>
<reference key="9">
    <citation type="journal article" date="1993" name="Immunogenetics">
        <title>Existence of at least five interleukin-2 molecules in different mouse strains.</title>
        <authorList>
            <person name="Matesanz F."/>
            <person name="Alcina A."/>
            <person name="Pellicer A."/>
        </authorList>
    </citation>
    <scope>NUCLEOTIDE SEQUENCE [GENOMIC DNA] OF 1-63</scope>
    <source>
        <strain>CAST/EiJ</strain>
        <strain>RF/J</strain>
        <tissue>Spleen</tissue>
    </source>
</reference>
<reference key="10">
    <citation type="journal article" date="1998" name="Dev. Immunol.">
        <title>Thymic stromal-cell abnormalities and dysregulated T-cell development in IL-2-deficient mice.</title>
        <authorList>
            <person name="Reya T."/>
            <person name="Bassiri H."/>
            <person name="Biancaniello R."/>
            <person name="Carding S.R."/>
        </authorList>
    </citation>
    <scope>FUNCTION</scope>
    <scope>DISRUPTION PHENOTYPE</scope>
</reference>
<reference key="11">
    <citation type="journal article" date="2001" name="Nat. Immunol.">
        <title>Inducible IL-2 production by dendritic cells revealed by global gene expression analysis.</title>
        <authorList>
            <person name="Granucci F."/>
            <person name="Vizzardelli C."/>
            <person name="Pavelka N."/>
            <person name="Feau S."/>
            <person name="Persico M."/>
            <person name="Virzi E."/>
            <person name="Rescigno M."/>
            <person name="Moro G."/>
            <person name="Ricciardi-Castagnoli P."/>
        </authorList>
    </citation>
    <scope>FUNCTION</scope>
    <scope>TISSUE SPECIFICITY</scope>
    <scope>INDUCTION BY DENDRITIC CELLS</scope>
</reference>
<reference key="12">
    <citation type="journal article" date="2003" name="Immunity">
        <title>Stat5 activation plays a critical role in Th2 differentiation.</title>
        <authorList>
            <person name="Zhu J."/>
            <person name="Cote-Sierra J."/>
            <person name="Guo L."/>
            <person name="Paul W.E."/>
        </authorList>
    </citation>
    <scope>FUNCTION</scope>
</reference>
<reference key="13">
    <citation type="journal article" date="2016" name="Nat. Chem. Biol.">
        <title>Essential biphasic role for JAK3 catalytic activity in IL-2 receptor signaling.</title>
        <authorList>
            <person name="Smith G.A."/>
            <person name="Uchida K."/>
            <person name="Weiss A."/>
            <person name="Taunton J."/>
        </authorList>
    </citation>
    <scope>FUNCTION</scope>
</reference>
<reference key="14">
    <citation type="journal article" date="1993" name="EMBO J.">
        <title>Definition and spatial location of mouse interleukin-2 residues that interact with its heterotrimeric receptor.</title>
        <authorList>
            <person name="Zurawski S."/>
            <person name="Vega F. Jr."/>
            <person name="Doyel E.L."/>
            <person name="Huyghe B."/>
            <person name="Flaherty K."/>
            <person name="McKay D.B."/>
            <person name="Zurawski G."/>
        </authorList>
    </citation>
    <scope>3D-STRUCTURE MODELING</scope>
</reference>
<reference evidence="7 8" key="15">
    <citation type="journal article" date="2015" name="Immunity">
        <title>Antibodies to Interleukin-2 Elicit Selective T Cell Subset Potentiation through Distinct Conformational Mechanisms.</title>
        <authorList>
            <person name="Spangler J.B."/>
            <person name="Tomala J."/>
            <person name="Luca V.C."/>
            <person name="Jude K.M."/>
            <person name="Dong S."/>
            <person name="Ring A.M."/>
            <person name="Votavova P."/>
            <person name="Pepper M."/>
            <person name="Kovar M."/>
            <person name="Garcia K.C."/>
        </authorList>
    </citation>
    <scope>X-RAY CRYSTALLOGRAPHY (2.19 ANGSTROMS) OF 47-169</scope>
    <scope>DISULFIDE BOND</scope>
</reference>
<feature type="signal peptide">
    <location>
        <begin position="1"/>
        <end position="20"/>
    </location>
</feature>
<feature type="chain" id="PRO_0000015493" description="Interleukin-2">
    <location>
        <begin position="21"/>
        <end position="169"/>
    </location>
</feature>
<feature type="glycosylation site" description="O-linked (GalNAc...) threonine" evidence="1">
    <location>
        <position position="23"/>
    </location>
</feature>
<feature type="disulfide bond" evidence="4 7 8">
    <location>
        <begin position="92"/>
        <end position="140"/>
    </location>
</feature>
<feature type="sequence variant" description="In strain: RF/J and CAST/Ei.">
    <original>S</original>
    <variation>P</variation>
    <location>
        <position position="26"/>
    </location>
</feature>
<feature type="sequence variant" description="In strain: RF/J.">
    <original>S</original>
    <variation>P</variation>
    <location>
        <position position="30"/>
    </location>
</feature>
<feature type="sequence variant" description="In strain: CAST/Ei.">
    <original>AEAQQQQQ</original>
    <variation>SSSTAEA</variation>
    <location>
        <begin position="32"/>
        <end position="39"/>
    </location>
</feature>
<feature type="sequence variant" description="In strain: RF/J.">
    <original>AEAQQQQ</original>
    <variation>SSSTAEA</variation>
    <location>
        <begin position="32"/>
        <end position="38"/>
    </location>
</feature>
<feature type="sequence conflict" description="In Ref. 4; AAA39281." evidence="6" ref="4">
    <original>Q</original>
    <variation>E</variation>
    <location>
        <position position="108"/>
    </location>
</feature>
<feature type="helix" evidence="10">
    <location>
        <begin position="47"/>
        <end position="60"/>
    </location>
</feature>
<feature type="helix" evidence="9">
    <location>
        <begin position="70"/>
        <end position="73"/>
    </location>
</feature>
<feature type="strand" evidence="9">
    <location>
        <begin position="75"/>
        <end position="79"/>
    </location>
</feature>
<feature type="helix" evidence="10">
    <location>
        <begin position="87"/>
        <end position="90"/>
    </location>
</feature>
<feature type="helix" evidence="10">
    <location>
        <begin position="91"/>
        <end position="94"/>
    </location>
</feature>
<feature type="helix" evidence="10">
    <location>
        <begin position="97"/>
        <end position="103"/>
    </location>
</feature>
<feature type="helix" evidence="10">
    <location>
        <begin position="118"/>
        <end position="132"/>
    </location>
</feature>
<feature type="strand" evidence="9">
    <location>
        <begin position="134"/>
        <end position="136"/>
    </location>
</feature>
<feature type="strand" evidence="9">
    <location>
        <begin position="144"/>
        <end position="148"/>
    </location>
</feature>
<feature type="helix" evidence="10">
    <location>
        <begin position="149"/>
        <end position="164"/>
    </location>
</feature>
<gene>
    <name type="primary">Il2</name>
    <name type="synonym">Il-2</name>
</gene>
<dbReference type="EMBL" id="X01663">
    <property type="protein sequence ID" value="CAA25823.1"/>
    <property type="molecule type" value="Genomic_DNA"/>
</dbReference>
<dbReference type="EMBL" id="X01664">
    <property type="protein sequence ID" value="CAA25824.1"/>
    <property type="molecule type" value="Genomic_DNA"/>
</dbReference>
<dbReference type="EMBL" id="X01665">
    <property type="protein sequence ID" value="CAA25825.1"/>
    <property type="molecule type" value="Genomic_DNA"/>
</dbReference>
<dbReference type="EMBL" id="X01772">
    <property type="protein sequence ID" value="CAA25909.1"/>
    <property type="molecule type" value="mRNA"/>
</dbReference>
<dbReference type="EMBL" id="K02292">
    <property type="protein sequence ID" value="AAA39289.1"/>
    <property type="molecule type" value="mRNA"/>
</dbReference>
<dbReference type="EMBL" id="M16762">
    <property type="protein sequence ID" value="AAA39281.1"/>
    <property type="molecule type" value="Genomic_DNA"/>
</dbReference>
<dbReference type="EMBL" id="M16760">
    <property type="protein sequence ID" value="AAA39281.1"/>
    <property type="status" value="JOINED"/>
    <property type="molecule type" value="Genomic_DNA"/>
</dbReference>
<dbReference type="EMBL" id="M16761">
    <property type="protein sequence ID" value="AAA39281.1"/>
    <property type="status" value="JOINED"/>
    <property type="molecule type" value="Genomic_DNA"/>
</dbReference>
<dbReference type="EMBL" id="AF195956">
    <property type="protein sequence ID" value="AAF32272.1"/>
    <property type="molecule type" value="Genomic_DNA"/>
</dbReference>
<dbReference type="EMBL" id="AF065914">
    <property type="protein sequence ID" value="AAD25890.1"/>
    <property type="molecule type" value="mRNA"/>
</dbReference>
<dbReference type="EMBL" id="AL662823">
    <property type="status" value="NOT_ANNOTATED_CDS"/>
    <property type="molecule type" value="Genomic_DNA"/>
</dbReference>
<dbReference type="EMBL" id="X66058">
    <property type="protein sequence ID" value="CAA46854.1"/>
    <property type="molecule type" value="mRNA"/>
</dbReference>
<dbReference type="EMBL" id="L07574">
    <property type="protein sequence ID" value="AAA39326.1"/>
    <property type="molecule type" value="Genomic_DNA"/>
</dbReference>
<dbReference type="EMBL" id="L07576">
    <property type="protein sequence ID" value="AAA39328.1"/>
    <property type="molecule type" value="Genomic_DNA"/>
</dbReference>
<dbReference type="CCDS" id="CCDS17316.1"/>
<dbReference type="PIR" id="A93550">
    <property type="entry name" value="ICMS2"/>
</dbReference>
<dbReference type="PIR" id="I54512">
    <property type="entry name" value="I54512"/>
</dbReference>
<dbReference type="PIR" id="I68871">
    <property type="entry name" value="I68871"/>
</dbReference>
<dbReference type="RefSeq" id="NP_032392.1">
    <property type="nucleotide sequence ID" value="NM_008366.3"/>
</dbReference>
<dbReference type="PDB" id="4YQX">
    <property type="method" value="X-ray"/>
    <property type="resolution" value="2.83 A"/>
    <property type="chains" value="A/M=47-169"/>
</dbReference>
<dbReference type="PDB" id="4YUE">
    <property type="method" value="X-ray"/>
    <property type="resolution" value="2.19 A"/>
    <property type="chains" value="C=47-169"/>
</dbReference>
<dbReference type="PDBsum" id="4YQX"/>
<dbReference type="PDBsum" id="4YUE"/>
<dbReference type="SMR" id="P04351"/>
<dbReference type="FunCoup" id="P04351">
    <property type="interactions" value="910"/>
</dbReference>
<dbReference type="IntAct" id="P04351">
    <property type="interactions" value="1"/>
</dbReference>
<dbReference type="STRING" id="10090.ENSMUSP00000029275"/>
<dbReference type="BindingDB" id="P04351"/>
<dbReference type="ChEMBL" id="CHEMBL2466"/>
<dbReference type="GlyCosmos" id="P04351">
    <property type="glycosylation" value="1 site, No reported glycans"/>
</dbReference>
<dbReference type="GlyGen" id="P04351">
    <property type="glycosylation" value="2 sites"/>
</dbReference>
<dbReference type="PhosphoSitePlus" id="P04351"/>
<dbReference type="PaxDb" id="10090-ENSMUSP00000029275"/>
<dbReference type="ABCD" id="P04351">
    <property type="antibodies" value="2 sequenced antibodies"/>
</dbReference>
<dbReference type="Antibodypedia" id="4147">
    <property type="antibodies" value="2286 antibodies from 49 providers"/>
</dbReference>
<dbReference type="DNASU" id="16183"/>
<dbReference type="Ensembl" id="ENSMUST00000029275.6">
    <property type="protein sequence ID" value="ENSMUSP00000029275.6"/>
    <property type="gene ID" value="ENSMUSG00000027720.8"/>
</dbReference>
<dbReference type="GeneID" id="16183"/>
<dbReference type="KEGG" id="mmu:16183"/>
<dbReference type="UCSC" id="uc008pai.3">
    <property type="organism name" value="mouse"/>
</dbReference>
<dbReference type="AGR" id="MGI:96548"/>
<dbReference type="CTD" id="3558"/>
<dbReference type="MGI" id="MGI:96548">
    <property type="gene designation" value="Il2"/>
</dbReference>
<dbReference type="VEuPathDB" id="HostDB:ENSMUSG00000027720"/>
<dbReference type="eggNOG" id="ENOG502RVR5">
    <property type="taxonomic scope" value="Eukaryota"/>
</dbReference>
<dbReference type="GeneTree" id="ENSGT00390000003555"/>
<dbReference type="HOGENOM" id="CLU_124210_0_0_1"/>
<dbReference type="InParanoid" id="P04351"/>
<dbReference type="OMA" id="NGVNNYE"/>
<dbReference type="OrthoDB" id="9450228at2759"/>
<dbReference type="PhylomeDB" id="P04351"/>
<dbReference type="TreeFam" id="TF338200"/>
<dbReference type="Reactome" id="R-MMU-5673001">
    <property type="pathway name" value="RAF/MAP kinase cascade"/>
</dbReference>
<dbReference type="Reactome" id="R-MMU-9020558">
    <property type="pathway name" value="Interleukin-2 signaling"/>
</dbReference>
<dbReference type="Reactome" id="R-MMU-912526">
    <property type="pathway name" value="Interleukin receptor SHC signaling"/>
</dbReference>
<dbReference type="BioGRID-ORCS" id="16183">
    <property type="hits" value="2 hits in 118 CRISPR screens"/>
</dbReference>
<dbReference type="ChiTaRS" id="Il2">
    <property type="organism name" value="mouse"/>
</dbReference>
<dbReference type="EvolutionaryTrace" id="P04351"/>
<dbReference type="PRO" id="PR:P04351"/>
<dbReference type="Proteomes" id="UP000000589">
    <property type="component" value="Chromosome 3"/>
</dbReference>
<dbReference type="RNAct" id="P04351">
    <property type="molecule type" value="protein"/>
</dbReference>
<dbReference type="Bgee" id="ENSMUSG00000027720">
    <property type="expression patterns" value="Expressed in chordate pharynx and 15 other cell types or tissues"/>
</dbReference>
<dbReference type="GO" id="GO:0005615">
    <property type="term" value="C:extracellular space"/>
    <property type="evidence" value="ECO:0000314"/>
    <property type="project" value="MGI"/>
</dbReference>
<dbReference type="GO" id="GO:0005125">
    <property type="term" value="F:cytokine activity"/>
    <property type="evidence" value="ECO:0000314"/>
    <property type="project" value="MGI"/>
</dbReference>
<dbReference type="GO" id="GO:0008083">
    <property type="term" value="F:growth factor activity"/>
    <property type="evidence" value="ECO:0007669"/>
    <property type="project" value="UniProtKB-KW"/>
</dbReference>
<dbReference type="GO" id="GO:0005134">
    <property type="term" value="F:interleukin-2 receptor binding"/>
    <property type="evidence" value="ECO:0000314"/>
    <property type="project" value="MGI"/>
</dbReference>
<dbReference type="GO" id="GO:0050798">
    <property type="term" value="P:activated T cell proliferation"/>
    <property type="evidence" value="ECO:0000314"/>
    <property type="project" value="MGI"/>
</dbReference>
<dbReference type="GO" id="GO:0002250">
    <property type="term" value="P:adaptive immune response"/>
    <property type="evidence" value="ECO:0007669"/>
    <property type="project" value="UniProtKB-KW"/>
</dbReference>
<dbReference type="GO" id="GO:0097696">
    <property type="term" value="P:cell surface receptor signaling pathway via STAT"/>
    <property type="evidence" value="ECO:0007669"/>
    <property type="project" value="Ensembl"/>
</dbReference>
<dbReference type="GO" id="GO:0097192">
    <property type="term" value="P:extrinsic apoptotic signaling pathway in absence of ligand"/>
    <property type="evidence" value="ECO:0000314"/>
    <property type="project" value="MGI"/>
</dbReference>
<dbReference type="GO" id="GO:0010467">
    <property type="term" value="P:gene expression"/>
    <property type="evidence" value="ECO:0000314"/>
    <property type="project" value="MGI"/>
</dbReference>
<dbReference type="GO" id="GO:0038110">
    <property type="term" value="P:interleukin-2-mediated signaling pathway"/>
    <property type="evidence" value="ECO:0007669"/>
    <property type="project" value="Ensembl"/>
</dbReference>
<dbReference type="GO" id="GO:0002366">
    <property type="term" value="P:leukocyte activation involved in immune response"/>
    <property type="evidence" value="ECO:0007669"/>
    <property type="project" value="Ensembl"/>
</dbReference>
<dbReference type="GO" id="GO:0046651">
    <property type="term" value="P:lymphocyte proliferation"/>
    <property type="evidence" value="ECO:0000315"/>
    <property type="project" value="MGI"/>
</dbReference>
<dbReference type="GO" id="GO:0002903">
    <property type="term" value="P:negative regulation of B cell apoptotic process"/>
    <property type="evidence" value="ECO:0000266"/>
    <property type="project" value="MGI"/>
</dbReference>
<dbReference type="GO" id="GO:0050728">
    <property type="term" value="P:negative regulation of inflammatory response"/>
    <property type="evidence" value="ECO:0000315"/>
    <property type="project" value="MGI"/>
</dbReference>
<dbReference type="GO" id="GO:0050672">
    <property type="term" value="P:negative regulation of lymphocyte proliferation"/>
    <property type="evidence" value="ECO:0000315"/>
    <property type="project" value="MGI"/>
</dbReference>
<dbReference type="GO" id="GO:2000320">
    <property type="term" value="P:negative regulation of T-helper 17 cell differentiation"/>
    <property type="evidence" value="ECO:0000316"/>
    <property type="project" value="BHF-UCL"/>
</dbReference>
<dbReference type="GO" id="GO:0042104">
    <property type="term" value="P:positive regulation of activated T cell proliferation"/>
    <property type="evidence" value="ECO:0000314"/>
    <property type="project" value="MGI"/>
</dbReference>
<dbReference type="GO" id="GO:0030890">
    <property type="term" value="P:positive regulation of B cell proliferation"/>
    <property type="evidence" value="ECO:0000266"/>
    <property type="project" value="MGI"/>
</dbReference>
<dbReference type="GO" id="GO:0002639">
    <property type="term" value="P:positive regulation of immunoglobulin production"/>
    <property type="evidence" value="ECO:0000315"/>
    <property type="project" value="MGI"/>
</dbReference>
<dbReference type="GO" id="GO:0032740">
    <property type="term" value="P:positive regulation of interleukin-17 production"/>
    <property type="evidence" value="ECO:0007669"/>
    <property type="project" value="Ensembl"/>
</dbReference>
<dbReference type="GO" id="GO:0048304">
    <property type="term" value="P:positive regulation of isotype switching to IgG isotypes"/>
    <property type="evidence" value="ECO:0000315"/>
    <property type="project" value="MGI"/>
</dbReference>
<dbReference type="GO" id="GO:1900100">
    <property type="term" value="P:positive regulation of plasma cell differentiation"/>
    <property type="evidence" value="ECO:0007669"/>
    <property type="project" value="Ensembl"/>
</dbReference>
<dbReference type="GO" id="GO:0042102">
    <property type="term" value="P:positive regulation of T cell proliferation"/>
    <property type="evidence" value="ECO:0000314"/>
    <property type="project" value="MGI"/>
</dbReference>
<dbReference type="GO" id="GO:0045944">
    <property type="term" value="P:positive regulation of transcription by RNA polymerase II"/>
    <property type="evidence" value="ECO:0000314"/>
    <property type="project" value="MGI"/>
</dbReference>
<dbReference type="GO" id="GO:0032729">
    <property type="term" value="P:positive regulation of type II interferon production"/>
    <property type="evidence" value="ECO:0000314"/>
    <property type="project" value="MGI"/>
</dbReference>
<dbReference type="GO" id="GO:2000561">
    <property type="term" value="P:regulation of CD4-positive, alpha-beta T cell proliferation"/>
    <property type="evidence" value="ECO:0000315"/>
    <property type="project" value="MGI"/>
</dbReference>
<dbReference type="GO" id="GO:0046013">
    <property type="term" value="P:regulation of T cell homeostatic proliferation"/>
    <property type="evidence" value="ECO:0000315"/>
    <property type="project" value="MGI"/>
</dbReference>
<dbReference type="GO" id="GO:0042098">
    <property type="term" value="P:T cell proliferation"/>
    <property type="evidence" value="ECO:0000314"/>
    <property type="project" value="MGI"/>
</dbReference>
<dbReference type="GO" id="GO:0006366">
    <property type="term" value="P:transcription by RNA polymerase II"/>
    <property type="evidence" value="ECO:0000314"/>
    <property type="project" value="MGI"/>
</dbReference>
<dbReference type="Gene3D" id="1.20.1250.10">
    <property type="match status" value="1"/>
</dbReference>
<dbReference type="InterPro" id="IPR009079">
    <property type="entry name" value="4_helix_cytokine-like_core"/>
</dbReference>
<dbReference type="InterPro" id="IPR000779">
    <property type="entry name" value="IL-2"/>
</dbReference>
<dbReference type="InterPro" id="IPR030477">
    <property type="entry name" value="IL-2_CS"/>
</dbReference>
<dbReference type="PANTHER" id="PTHR48487">
    <property type="entry name" value="INTERLEUKIN-2"/>
    <property type="match status" value="1"/>
</dbReference>
<dbReference type="PANTHER" id="PTHR48487:SF1">
    <property type="entry name" value="INTERLEUKIN-2"/>
    <property type="match status" value="1"/>
</dbReference>
<dbReference type="Pfam" id="PF00715">
    <property type="entry name" value="IL2"/>
    <property type="match status" value="1"/>
</dbReference>
<dbReference type="PRINTS" id="PR00265">
    <property type="entry name" value="INTERLEUKIN2"/>
</dbReference>
<dbReference type="SMART" id="SM00189">
    <property type="entry name" value="IL2"/>
    <property type="match status" value="1"/>
</dbReference>
<dbReference type="SUPFAM" id="SSF47266">
    <property type="entry name" value="4-helical cytokines"/>
    <property type="match status" value="1"/>
</dbReference>
<dbReference type="PROSITE" id="PS00424">
    <property type="entry name" value="INTERLEUKIN_2"/>
    <property type="match status" value="1"/>
</dbReference>
<proteinExistence type="evidence at protein level"/>
<sequence length="169" mass="19400">MYSMQLASCVTLTLVLLVNSAPTSSSTSSSTAEAQQQQQQQQQQQQHLEQLLMDLQELLSRMENYRNLKLPRMLTFKFYLPKQATELKDLQCLEDELGPLRHVLDLTQSKSFQLEDAENFISNIRVTVVKLKGSDNTFECQFDDESATVVDFLRRWIAFCQSIISTSPQ</sequence>
<evidence type="ECO:0000250" key="1"/>
<evidence type="ECO:0000250" key="2">
    <source>
        <dbReference type="UniProtKB" id="P60568"/>
    </source>
</evidence>
<evidence type="ECO:0000269" key="3">
    <source>
    </source>
</evidence>
<evidence type="ECO:0000269" key="4">
    <source>
    </source>
</evidence>
<evidence type="ECO:0000269" key="5">
    <source>
    </source>
</evidence>
<evidence type="ECO:0000305" key="6"/>
<evidence type="ECO:0007744" key="7">
    <source>
        <dbReference type="PDB" id="4YQX"/>
    </source>
</evidence>
<evidence type="ECO:0007744" key="8">
    <source>
        <dbReference type="PDB" id="4YUE"/>
    </source>
</evidence>
<evidence type="ECO:0007829" key="9">
    <source>
        <dbReference type="PDB" id="4YQX"/>
    </source>
</evidence>
<evidence type="ECO:0007829" key="10">
    <source>
        <dbReference type="PDB" id="4YUE"/>
    </source>
</evidence>
<accession>P04351</accession>
<accession>P97945</accession>
<accession>Q791T3</accession>
<keyword id="KW-0002">3D-structure</keyword>
<keyword id="KW-1064">Adaptive immunity</keyword>
<keyword id="KW-0202">Cytokine</keyword>
<keyword id="KW-1015">Disulfide bond</keyword>
<keyword id="KW-0325">Glycoprotein</keyword>
<keyword id="KW-0339">Growth factor</keyword>
<keyword id="KW-0391">Immunity</keyword>
<keyword id="KW-1185">Reference proteome</keyword>
<keyword id="KW-0964">Secreted</keyword>
<keyword id="KW-0732">Signal</keyword>
<comment type="function">
    <text evidence="2 5">Cytokine produced by activated CD4-positive helper T-cells and to a lesser extend activated CD8-positive T-cells and natural killer (NK) cells that plays pivotal roles in the immune response and tolerance (PubMed:14614860, PubMed:9814585). Binds to a receptor complex composed of either the high-affinity trimeric IL-2R (IL2RA/CD25, IL2RB/CD122 and IL2RG/CD132) or the low-affinity dimeric IL-2R (IL2RB and IL2RG). Interaction with the receptor leads to oligomerization and conformation changes in the IL-2R subunits resulting in downstream signaling starting with phosphorylation of JAK1 and JAK3. In turn, JAK1 and JAK3 phosphorylate the receptor to form a docking site leading to the phosphorylation of several substrates including STAT5 (PubMed:14614860, PubMed:27018889). This process leads to activation of several pathways including STAT, phosphoinositide-3-kinase/PI3K and mitogen-activated protein kinase/MAPK pathways. Functions as a T-cell growth factor and can increase NK-cell cytolytic activity as well. Promotes strong proliferation of activated B-cells and subsequently immunoglobulin production. Plays a pivotal role in regulating the adaptive immune system by controlling the survival and proliferation of regulatory T-cells, which are required for the maintenance of immune tolerance (PubMed:14614860). Moreover, participates in the differentiation and homeostasis of effector T-cell subsets, including Th1, Th2, Th17 as well as memory CD8-positive T-cells (PubMed:9814585).</text>
</comment>
<comment type="subcellular location">
    <subcellularLocation>
        <location>Secreted</location>
    </subcellularLocation>
</comment>
<comment type="tissue specificity">
    <text evidence="3">Produced by immune cells including dendritic cells. In contrast, macrophages do not produce IL2 upon bacterial stimulation.</text>
</comment>
<comment type="induction">
    <text evidence="3">By bacterial infection.</text>
</comment>
<comment type="polymorphism">
    <text evidence="6">The poly-Gln region is highly polymorphic.</text>
</comment>
<comment type="disruption phenotype">
    <text evidence="5">Mutant mice exhibit lethal autoimmunity and are impaired in regulatory T-cell production. After 4 to 5 weeks of birth, they develop a thymic disorder resulting in the disruption of thymocyte maturation.</text>
</comment>
<comment type="similarity">
    <text evidence="6">Belongs to the IL-2 family.</text>
</comment>
<organism>
    <name type="scientific">Mus musculus</name>
    <name type="common">Mouse</name>
    <dbReference type="NCBI Taxonomy" id="10090"/>
    <lineage>
        <taxon>Eukaryota</taxon>
        <taxon>Metazoa</taxon>
        <taxon>Chordata</taxon>
        <taxon>Craniata</taxon>
        <taxon>Vertebrata</taxon>
        <taxon>Euteleostomi</taxon>
        <taxon>Mammalia</taxon>
        <taxon>Eutheria</taxon>
        <taxon>Euarchontoglires</taxon>
        <taxon>Glires</taxon>
        <taxon>Rodentia</taxon>
        <taxon>Myomorpha</taxon>
        <taxon>Muroidea</taxon>
        <taxon>Muridae</taxon>
        <taxon>Murinae</taxon>
        <taxon>Mus</taxon>
        <taxon>Mus</taxon>
    </lineage>
</organism>
<name>IL2_MOUSE</name>